<organism>
    <name type="scientific">Yersinia pestis bv. Antiqua (strain Antiqua)</name>
    <dbReference type="NCBI Taxonomy" id="360102"/>
    <lineage>
        <taxon>Bacteria</taxon>
        <taxon>Pseudomonadati</taxon>
        <taxon>Pseudomonadota</taxon>
        <taxon>Gammaproteobacteria</taxon>
        <taxon>Enterobacterales</taxon>
        <taxon>Yersiniaceae</taxon>
        <taxon>Yersinia</taxon>
    </lineage>
</organism>
<feature type="chain" id="PRO_1000070509" description="Enoyl-[acyl-carrier-protein] reductase [NADH]">
    <location>
        <begin position="1"/>
        <end position="399"/>
    </location>
</feature>
<feature type="active site" description="Proton donor" evidence="1">
    <location>
        <position position="235"/>
    </location>
</feature>
<feature type="binding site" evidence="1">
    <location>
        <begin position="48"/>
        <end position="53"/>
    </location>
    <ligand>
        <name>NAD(+)</name>
        <dbReference type="ChEBI" id="CHEBI:57540"/>
    </ligand>
</feature>
<feature type="binding site" evidence="1">
    <location>
        <begin position="74"/>
        <end position="75"/>
    </location>
    <ligand>
        <name>NAD(+)</name>
        <dbReference type="ChEBI" id="CHEBI:57540"/>
    </ligand>
</feature>
<feature type="binding site" evidence="1">
    <location>
        <begin position="111"/>
        <end position="112"/>
    </location>
    <ligand>
        <name>NAD(+)</name>
        <dbReference type="ChEBI" id="CHEBI:57540"/>
    </ligand>
</feature>
<feature type="binding site" evidence="1">
    <location>
        <begin position="139"/>
        <end position="140"/>
    </location>
    <ligand>
        <name>NAD(+)</name>
        <dbReference type="ChEBI" id="CHEBI:57540"/>
    </ligand>
</feature>
<feature type="binding site" evidence="1">
    <location>
        <position position="225"/>
    </location>
    <ligand>
        <name>substrate</name>
    </ligand>
</feature>
<feature type="binding site" evidence="1">
    <location>
        <position position="244"/>
    </location>
    <ligand>
        <name>NAD(+)</name>
        <dbReference type="ChEBI" id="CHEBI:57540"/>
    </ligand>
</feature>
<feature type="binding site" evidence="1">
    <location>
        <begin position="274"/>
        <end position="276"/>
    </location>
    <ligand>
        <name>NAD(+)</name>
        <dbReference type="ChEBI" id="CHEBI:57540"/>
    </ligand>
</feature>
<feature type="site" description="Plays an important role in discriminating NADH against NADPH" evidence="1">
    <location>
        <position position="75"/>
    </location>
</feature>
<comment type="function">
    <text evidence="1">Involved in the final reduction of the elongation cycle of fatty acid synthesis (FAS II). Catalyzes the reduction of a carbon-carbon double bond in an enoyl moiety that is covalently linked to an acyl carrier protein (ACP).</text>
</comment>
<comment type="catalytic activity">
    <reaction evidence="1">
        <text>a 2,3-saturated acyl-[ACP] + NAD(+) = a (2E)-enoyl-[ACP] + NADH + H(+)</text>
        <dbReference type="Rhea" id="RHEA:10240"/>
        <dbReference type="Rhea" id="RHEA-COMP:9925"/>
        <dbReference type="Rhea" id="RHEA-COMP:9926"/>
        <dbReference type="ChEBI" id="CHEBI:15378"/>
        <dbReference type="ChEBI" id="CHEBI:57540"/>
        <dbReference type="ChEBI" id="CHEBI:57945"/>
        <dbReference type="ChEBI" id="CHEBI:78784"/>
        <dbReference type="ChEBI" id="CHEBI:78785"/>
        <dbReference type="EC" id="1.3.1.9"/>
    </reaction>
</comment>
<comment type="pathway">
    <text evidence="1">Lipid metabolism; fatty acid biosynthesis.</text>
</comment>
<comment type="subunit">
    <text evidence="1">Monomer.</text>
</comment>
<comment type="similarity">
    <text evidence="1">Belongs to the TER reductase family.</text>
</comment>
<proteinExistence type="inferred from homology"/>
<gene>
    <name evidence="1" type="primary">fabV</name>
    <name type="ordered locus">YPA_4149</name>
</gene>
<evidence type="ECO:0000255" key="1">
    <source>
        <dbReference type="HAMAP-Rule" id="MF_01838"/>
    </source>
</evidence>
<keyword id="KW-0275">Fatty acid biosynthesis</keyword>
<keyword id="KW-0276">Fatty acid metabolism</keyword>
<keyword id="KW-0444">Lipid biosynthesis</keyword>
<keyword id="KW-0443">Lipid metabolism</keyword>
<keyword id="KW-0520">NAD</keyword>
<keyword id="KW-0560">Oxidoreductase</keyword>
<name>FABV_YERPA</name>
<accession>Q1C0B2</accession>
<protein>
    <recommendedName>
        <fullName evidence="1">Enoyl-[acyl-carrier-protein] reductase [NADH]</fullName>
        <shortName evidence="1">ENR</shortName>
        <ecNumber evidence="1">1.3.1.9</ecNumber>
    </recommendedName>
</protein>
<dbReference type="EC" id="1.3.1.9" evidence="1"/>
<dbReference type="EMBL" id="CP000308">
    <property type="protein sequence ID" value="ABG16110.1"/>
    <property type="molecule type" value="Genomic_DNA"/>
</dbReference>
<dbReference type="RefSeq" id="WP_002215588.1">
    <property type="nucleotide sequence ID" value="NZ_CP009906.1"/>
</dbReference>
<dbReference type="SMR" id="Q1C0B2"/>
<dbReference type="GeneID" id="57974620"/>
<dbReference type="KEGG" id="ypa:YPA_4149"/>
<dbReference type="UniPathway" id="UPA00094"/>
<dbReference type="Proteomes" id="UP000001971">
    <property type="component" value="Chromosome"/>
</dbReference>
<dbReference type="GO" id="GO:0004318">
    <property type="term" value="F:enoyl-[acyl-carrier-protein] reductase (NADH) activity"/>
    <property type="evidence" value="ECO:0007669"/>
    <property type="project" value="UniProtKB-UniRule"/>
</dbReference>
<dbReference type="GO" id="GO:0051287">
    <property type="term" value="F:NAD binding"/>
    <property type="evidence" value="ECO:0007669"/>
    <property type="project" value="UniProtKB-UniRule"/>
</dbReference>
<dbReference type="GO" id="GO:0050343">
    <property type="term" value="F:trans-2-enoyl-CoA reductase (NADH) activity"/>
    <property type="evidence" value="ECO:0007669"/>
    <property type="project" value="TreeGrafter"/>
</dbReference>
<dbReference type="GO" id="GO:0006633">
    <property type="term" value="P:fatty acid biosynthetic process"/>
    <property type="evidence" value="ECO:0007669"/>
    <property type="project" value="UniProtKB-UniRule"/>
</dbReference>
<dbReference type="FunFam" id="3.40.50.720:FF:000221">
    <property type="entry name" value="Enoyl-[acyl-carrier-protein] reductase [NADH]"/>
    <property type="match status" value="1"/>
</dbReference>
<dbReference type="Gene3D" id="3.40.50.720">
    <property type="entry name" value="NAD(P)-binding Rossmann-like Domain"/>
    <property type="match status" value="1"/>
</dbReference>
<dbReference type="HAMAP" id="MF_01838">
    <property type="entry name" value="FabV_reductase"/>
    <property type="match status" value="1"/>
</dbReference>
<dbReference type="InterPro" id="IPR024906">
    <property type="entry name" value="Eno_Rdtase_FAD-bd_dom"/>
</dbReference>
<dbReference type="InterPro" id="IPR024910">
    <property type="entry name" value="Enoyl-CoA_Rdtase_cat_dom"/>
</dbReference>
<dbReference type="InterPro" id="IPR050048">
    <property type="entry name" value="FabV-like_NADH_b"/>
</dbReference>
<dbReference type="InterPro" id="IPR010758">
    <property type="entry name" value="Trans-2-enoyl-CoA_reductase"/>
</dbReference>
<dbReference type="NCBIfam" id="NF043048">
    <property type="entry name" value="EnoyACPredFabV"/>
    <property type="match status" value="1"/>
</dbReference>
<dbReference type="NCBIfam" id="NF010177">
    <property type="entry name" value="PRK13656.1"/>
    <property type="match status" value="1"/>
</dbReference>
<dbReference type="PANTHER" id="PTHR37480">
    <property type="entry name" value="ENOYL-[ACYL-CARRIER-PROTEIN] REDUCTASE [NADH]"/>
    <property type="match status" value="1"/>
</dbReference>
<dbReference type="PANTHER" id="PTHR37480:SF1">
    <property type="entry name" value="ENOYL-[ACYL-CARRIER-PROTEIN] REDUCTASE [NADH]"/>
    <property type="match status" value="1"/>
</dbReference>
<dbReference type="Pfam" id="PF07055">
    <property type="entry name" value="Eno-Rase_FAD_bd"/>
    <property type="match status" value="1"/>
</dbReference>
<dbReference type="Pfam" id="PF12242">
    <property type="entry name" value="Eno-Rase_NADH_b"/>
    <property type="match status" value="1"/>
</dbReference>
<dbReference type="Pfam" id="PF12241">
    <property type="entry name" value="Enoyl_reductase"/>
    <property type="match status" value="1"/>
</dbReference>
<reference key="1">
    <citation type="journal article" date="2006" name="J. Bacteriol.">
        <title>Complete genome sequence of Yersinia pestis strains Antiqua and Nepal516: evidence of gene reduction in an emerging pathogen.</title>
        <authorList>
            <person name="Chain P.S.G."/>
            <person name="Hu P."/>
            <person name="Malfatti S.A."/>
            <person name="Radnedge L."/>
            <person name="Larimer F."/>
            <person name="Vergez L.M."/>
            <person name="Worsham P."/>
            <person name="Chu M.C."/>
            <person name="Andersen G.L."/>
        </authorList>
    </citation>
    <scope>NUCLEOTIDE SEQUENCE [LARGE SCALE GENOMIC DNA]</scope>
    <source>
        <strain>Antiqua</strain>
    </source>
</reference>
<sequence length="399" mass="43346">MIIKPRVRGFICVTAHPTGCEANVKKQIDYVTTEGPIANGPKRVLVIGASTGYGLAARITAAFGCGADTLGVFFERPGEEGKPGTSGWYNSAAFHKFAAQKGLYAKSINGDAFSDEIKQLTIDAIKQDLGQVDQVIYSLASPRRTHPKTGEVFNSALKPIGNAVNLRGLDTDKEVIKESVLQPATQSEIDSTVAVMGGEDWQMWIDALLDAGVLAEGAQTTAFTYLGEKITHDIYWNGSIGAAKKDLDQKVLAIRESLAAHGGGDARVSVLKAVVTQASSAIPMMPLYLSLLFKVMKEKGTHEGCIEQVYSLYKDSLCGDSPHMDQEGRLRADYKELDPEVQNQVQQLWDQVTNDNIYQLTDFVGYKSEFLNLFGFGIDGVDYDADVNPDVKIPNLIQG</sequence>